<sequence>MAASASASALQAERCLLVGVGAGPRRHRLPLRMPPPLHAPPALLLLPHRRRRRWPPAVRASPGEGGGGGGGGGGGGGLAGALEKRPVMSALTVVVMNMRVLEIGVVAWSLATAIIPAVAGFMPGLVLSRILVGIGEGVSPSAATDLIARSIPVQERSRAVAVVFGGLSFGSVLGLLFAPPIIQNLGWESVFYIFGLLGIIWCLGFQSLKEQQLRGNEDIQVIQDLGQSPSGSSDLISSSVSPKSSESSLGELMNSLKDVPWREFFKSKAVWAMIYAHFCGSWGHYTCLSWLPTFFSEELDLNLTEAAWVSVLPPLGSMIITSIAAPFADNLISNGVDTTKVRKICQTIAFLSPATFMMLSSVDLGVPPWEIVAFLTSGLALSSFALSGLYCTHQDISREYASILLGITNTVGAVPGIVGVALTGYLLDTTHSWSISLFAPSIFFYLTGTAVWLAFASSEPQEFSKSEPESS</sequence>
<gene>
    <name type="primary">PHT4;5</name>
    <name type="ordered locus">Os09g0556400</name>
    <name type="ordered locus">LOC_Os09g38410</name>
</gene>
<dbReference type="EMBL" id="AP008215">
    <property type="protein sequence ID" value="BAF25812.1"/>
    <property type="status" value="ALT_SEQ"/>
    <property type="molecule type" value="Genomic_DNA"/>
</dbReference>
<dbReference type="EMBL" id="AP014965">
    <property type="status" value="NOT_ANNOTATED_CDS"/>
    <property type="molecule type" value="Genomic_DNA"/>
</dbReference>
<dbReference type="EMBL" id="AK059357">
    <property type="protein sequence ID" value="BAG86970.1"/>
    <property type="status" value="ALT_INIT"/>
    <property type="molecule type" value="mRNA"/>
</dbReference>
<dbReference type="RefSeq" id="XP_015612099.1">
    <property type="nucleotide sequence ID" value="XM_015756613.1"/>
</dbReference>
<dbReference type="SMR" id="Q0IZQ3"/>
<dbReference type="FunCoup" id="Q0IZQ3">
    <property type="interactions" value="47"/>
</dbReference>
<dbReference type="STRING" id="39947.Q0IZQ3"/>
<dbReference type="PaxDb" id="39947-Q0IZQ3"/>
<dbReference type="KEGG" id="dosa:Os09g0556400"/>
<dbReference type="eggNOG" id="KOG2532">
    <property type="taxonomic scope" value="Eukaryota"/>
</dbReference>
<dbReference type="HOGENOM" id="CLU_001265_5_11_1"/>
<dbReference type="InParanoid" id="Q0IZQ3"/>
<dbReference type="Proteomes" id="UP000000763">
    <property type="component" value="Chromosome 9"/>
</dbReference>
<dbReference type="Proteomes" id="UP000059680">
    <property type="component" value="Chromosome 9"/>
</dbReference>
<dbReference type="GO" id="GO:0031969">
    <property type="term" value="C:chloroplast membrane"/>
    <property type="evidence" value="ECO:0007669"/>
    <property type="project" value="UniProtKB-SubCell"/>
</dbReference>
<dbReference type="GO" id="GO:0022857">
    <property type="term" value="F:transmembrane transporter activity"/>
    <property type="evidence" value="ECO:0007669"/>
    <property type="project" value="InterPro"/>
</dbReference>
<dbReference type="GO" id="GO:0006811">
    <property type="term" value="P:monoatomic ion transport"/>
    <property type="evidence" value="ECO:0007669"/>
    <property type="project" value="UniProtKB-KW"/>
</dbReference>
<dbReference type="FunFam" id="1.20.1250.20:FF:000213">
    <property type="entry name" value="Probable anion transporter 6, chloroplastic"/>
    <property type="match status" value="1"/>
</dbReference>
<dbReference type="Gene3D" id="1.20.1250.20">
    <property type="entry name" value="MFS general substrate transporter like domains"/>
    <property type="match status" value="2"/>
</dbReference>
<dbReference type="InterPro" id="IPR011701">
    <property type="entry name" value="MFS"/>
</dbReference>
<dbReference type="InterPro" id="IPR020846">
    <property type="entry name" value="MFS_dom"/>
</dbReference>
<dbReference type="InterPro" id="IPR050382">
    <property type="entry name" value="MFS_Na/Anion_cotransporter"/>
</dbReference>
<dbReference type="InterPro" id="IPR036259">
    <property type="entry name" value="MFS_trans_sf"/>
</dbReference>
<dbReference type="PANTHER" id="PTHR11662:SF243">
    <property type="entry name" value="ANION TRANSPORTER 6, CHLOROPLASTIC-RELATED"/>
    <property type="match status" value="1"/>
</dbReference>
<dbReference type="PANTHER" id="PTHR11662">
    <property type="entry name" value="SOLUTE CARRIER FAMILY 17"/>
    <property type="match status" value="1"/>
</dbReference>
<dbReference type="Pfam" id="PF07690">
    <property type="entry name" value="MFS_1"/>
    <property type="match status" value="1"/>
</dbReference>
<dbReference type="SUPFAM" id="SSF103473">
    <property type="entry name" value="MFS general substrate transporter"/>
    <property type="match status" value="1"/>
</dbReference>
<dbReference type="PROSITE" id="PS50850">
    <property type="entry name" value="MFS"/>
    <property type="match status" value="1"/>
</dbReference>
<reference key="1">
    <citation type="journal article" date="2005" name="Nature">
        <title>The map-based sequence of the rice genome.</title>
        <authorList>
            <consortium name="International rice genome sequencing project (IRGSP)"/>
        </authorList>
    </citation>
    <scope>NUCLEOTIDE SEQUENCE [LARGE SCALE GENOMIC DNA]</scope>
    <source>
        <strain>cv. Nipponbare</strain>
    </source>
</reference>
<reference key="2">
    <citation type="journal article" date="2008" name="Nucleic Acids Res.">
        <title>The rice annotation project database (RAP-DB): 2008 update.</title>
        <authorList>
            <consortium name="The rice annotation project (RAP)"/>
        </authorList>
    </citation>
    <scope>GENOME REANNOTATION</scope>
    <source>
        <strain>cv. Nipponbare</strain>
    </source>
</reference>
<reference key="3">
    <citation type="journal article" date="2013" name="Rice">
        <title>Improvement of the Oryza sativa Nipponbare reference genome using next generation sequence and optical map data.</title>
        <authorList>
            <person name="Kawahara Y."/>
            <person name="de la Bastide M."/>
            <person name="Hamilton J.P."/>
            <person name="Kanamori H."/>
            <person name="McCombie W.R."/>
            <person name="Ouyang S."/>
            <person name="Schwartz D.C."/>
            <person name="Tanaka T."/>
            <person name="Wu J."/>
            <person name="Zhou S."/>
            <person name="Childs K.L."/>
            <person name="Davidson R.M."/>
            <person name="Lin H."/>
            <person name="Quesada-Ocampo L."/>
            <person name="Vaillancourt B."/>
            <person name="Sakai H."/>
            <person name="Lee S.S."/>
            <person name="Kim J."/>
            <person name="Numa H."/>
            <person name="Itoh T."/>
            <person name="Buell C.R."/>
            <person name="Matsumoto T."/>
        </authorList>
    </citation>
    <scope>GENOME REANNOTATION</scope>
    <source>
        <strain>cv. Nipponbare</strain>
    </source>
</reference>
<reference key="4">
    <citation type="journal article" date="2003" name="Science">
        <title>Collection, mapping, and annotation of over 28,000 cDNA clones from japonica rice.</title>
        <authorList>
            <consortium name="The rice full-length cDNA consortium"/>
        </authorList>
    </citation>
    <scope>NUCLEOTIDE SEQUENCE [LARGE SCALE MRNA] OF 126-471</scope>
    <source>
        <strain>cv. Nipponbare</strain>
    </source>
</reference>
<reference key="5">
    <citation type="journal article" date="2008" name="Plant Signal. Behav.">
        <title>Differential expression and phylogenetic analysis suggest specialization of plastid-localized members of the PHT4 phosphate transporter family for photosynthetic and heterotrophic tissues.</title>
        <authorList>
            <person name="Guo B."/>
            <person name="Irigoyen S."/>
            <person name="Fowler T.B."/>
            <person name="Versaw W.K."/>
        </authorList>
    </citation>
    <scope>GENE FAMILY</scope>
    <scope>NOMENCLATURE</scope>
</reference>
<protein>
    <recommendedName>
        <fullName>Probable anion transporter 5, chloroplastic</fullName>
    </recommendedName>
    <alternativeName>
        <fullName>Phosphate transporter 4;5</fullName>
    </alternativeName>
</protein>
<proteinExistence type="evidence at transcript level"/>
<comment type="function">
    <text evidence="1">Probable anion transporter.</text>
</comment>
<comment type="subcellular location">
    <subcellularLocation>
        <location evidence="4">Plastid</location>
        <location evidence="4">Chloroplast membrane</location>
        <topology evidence="4">Multi-pass membrane protein</topology>
    </subcellularLocation>
</comment>
<comment type="similarity">
    <text evidence="4">Belongs to the major facilitator superfamily. Sodium/anion cotransporter (TC 2.A.1.14) family.</text>
</comment>
<comment type="sequence caution" evidence="4">
    <conflict type="erroneous gene model prediction">
        <sequence resource="EMBL-CDS" id="BAF25812"/>
    </conflict>
</comment>
<comment type="sequence caution" evidence="4">
    <conflict type="erroneous initiation">
        <sequence resource="EMBL-CDS" id="BAG86970"/>
    </conflict>
</comment>
<feature type="transit peptide" description="Chloroplast" evidence="2">
    <location>
        <begin position="1"/>
        <end position="59"/>
    </location>
</feature>
<feature type="chain" id="PRO_0000383103" description="Probable anion transporter 5, chloroplastic">
    <location>
        <begin position="60"/>
        <end position="471"/>
    </location>
</feature>
<feature type="transmembrane region" description="Helical" evidence="2">
    <location>
        <begin position="62"/>
        <end position="82"/>
    </location>
</feature>
<feature type="transmembrane region" description="Helical" evidence="2">
    <location>
        <begin position="103"/>
        <end position="123"/>
    </location>
</feature>
<feature type="transmembrane region" description="Helical" evidence="2">
    <location>
        <begin position="162"/>
        <end position="182"/>
    </location>
</feature>
<feature type="transmembrane region" description="Helical" evidence="2">
    <location>
        <begin position="185"/>
        <end position="205"/>
    </location>
</feature>
<feature type="transmembrane region" description="Helical" evidence="2">
    <location>
        <begin position="270"/>
        <end position="290"/>
    </location>
</feature>
<feature type="transmembrane region" description="Helical" evidence="2">
    <location>
        <begin position="307"/>
        <end position="327"/>
    </location>
</feature>
<feature type="transmembrane region" description="Helical" evidence="2">
    <location>
        <begin position="348"/>
        <end position="368"/>
    </location>
</feature>
<feature type="transmembrane region" description="Helical" evidence="2">
    <location>
        <begin position="371"/>
        <end position="391"/>
    </location>
</feature>
<feature type="transmembrane region" description="Helical" evidence="2">
    <location>
        <begin position="403"/>
        <end position="423"/>
    </location>
</feature>
<feature type="transmembrane region" description="Helical" evidence="2">
    <location>
        <begin position="435"/>
        <end position="455"/>
    </location>
</feature>
<feature type="region of interest" description="Disordered" evidence="3">
    <location>
        <begin position="56"/>
        <end position="76"/>
    </location>
</feature>
<feature type="region of interest" description="Disordered" evidence="3">
    <location>
        <begin position="226"/>
        <end position="247"/>
    </location>
</feature>
<feature type="compositionally biased region" description="Gly residues" evidence="3">
    <location>
        <begin position="63"/>
        <end position="76"/>
    </location>
</feature>
<feature type="compositionally biased region" description="Low complexity" evidence="3">
    <location>
        <begin position="228"/>
        <end position="247"/>
    </location>
</feature>
<feature type="sequence conflict" description="In Ref. 4; BAG86970." evidence="4" ref="4">
    <original>A</original>
    <variation>S</variation>
    <location>
        <position position="307"/>
    </location>
</feature>
<accession>Q0IZQ3</accession>
<accession>B7E3M3</accession>
<evidence type="ECO:0000250" key="1"/>
<evidence type="ECO:0000255" key="2"/>
<evidence type="ECO:0000256" key="3">
    <source>
        <dbReference type="SAM" id="MobiDB-lite"/>
    </source>
</evidence>
<evidence type="ECO:0000305" key="4"/>
<organism>
    <name type="scientific">Oryza sativa subsp. japonica</name>
    <name type="common">Rice</name>
    <dbReference type="NCBI Taxonomy" id="39947"/>
    <lineage>
        <taxon>Eukaryota</taxon>
        <taxon>Viridiplantae</taxon>
        <taxon>Streptophyta</taxon>
        <taxon>Embryophyta</taxon>
        <taxon>Tracheophyta</taxon>
        <taxon>Spermatophyta</taxon>
        <taxon>Magnoliopsida</taxon>
        <taxon>Liliopsida</taxon>
        <taxon>Poales</taxon>
        <taxon>Poaceae</taxon>
        <taxon>BOP clade</taxon>
        <taxon>Oryzoideae</taxon>
        <taxon>Oryzeae</taxon>
        <taxon>Oryzinae</taxon>
        <taxon>Oryza</taxon>
        <taxon>Oryza sativa</taxon>
    </lineage>
</organism>
<name>PHT45_ORYSJ</name>
<keyword id="KW-0150">Chloroplast</keyword>
<keyword id="KW-0406">Ion transport</keyword>
<keyword id="KW-0472">Membrane</keyword>
<keyword id="KW-0934">Plastid</keyword>
<keyword id="KW-1185">Reference proteome</keyword>
<keyword id="KW-0809">Transit peptide</keyword>
<keyword id="KW-0812">Transmembrane</keyword>
<keyword id="KW-1133">Transmembrane helix</keyword>
<keyword id="KW-0813">Transport</keyword>